<reference key="1">
    <citation type="journal article" date="2008" name="J. Bacteriol.">
        <title>Complete genome sequence of uropathogenic Proteus mirabilis, a master of both adherence and motility.</title>
        <authorList>
            <person name="Pearson M.M."/>
            <person name="Sebaihia M."/>
            <person name="Churcher C."/>
            <person name="Quail M.A."/>
            <person name="Seshasayee A.S."/>
            <person name="Luscombe N.M."/>
            <person name="Abdellah Z."/>
            <person name="Arrosmith C."/>
            <person name="Atkin B."/>
            <person name="Chillingworth T."/>
            <person name="Hauser H."/>
            <person name="Jagels K."/>
            <person name="Moule S."/>
            <person name="Mungall K."/>
            <person name="Norbertczak H."/>
            <person name="Rabbinowitsch E."/>
            <person name="Walker D."/>
            <person name="Whithead S."/>
            <person name="Thomson N.R."/>
            <person name="Rather P.N."/>
            <person name="Parkhill J."/>
            <person name="Mobley H.L.T."/>
        </authorList>
    </citation>
    <scope>NUCLEOTIDE SEQUENCE [LARGE SCALE GENOMIC DNA]</scope>
    <source>
        <strain>HI4320</strain>
    </source>
</reference>
<dbReference type="EC" id="3.5.1.108" evidence="1"/>
<dbReference type="EMBL" id="AM942759">
    <property type="protein sequence ID" value="CAR44134.1"/>
    <property type="molecule type" value="Genomic_DNA"/>
</dbReference>
<dbReference type="RefSeq" id="WP_012368233.1">
    <property type="nucleotide sequence ID" value="NC_010554.1"/>
</dbReference>
<dbReference type="SMR" id="B4F105"/>
<dbReference type="EnsemblBacteria" id="CAR44134">
    <property type="protein sequence ID" value="CAR44134"/>
    <property type="gene ID" value="PMI2064"/>
</dbReference>
<dbReference type="GeneID" id="6802752"/>
<dbReference type="KEGG" id="pmr:PMI2064"/>
<dbReference type="eggNOG" id="COG0774">
    <property type="taxonomic scope" value="Bacteria"/>
</dbReference>
<dbReference type="HOGENOM" id="CLU_046528_1_0_6"/>
<dbReference type="UniPathway" id="UPA00359">
    <property type="reaction ID" value="UER00478"/>
</dbReference>
<dbReference type="Proteomes" id="UP000008319">
    <property type="component" value="Chromosome"/>
</dbReference>
<dbReference type="GO" id="GO:0016020">
    <property type="term" value="C:membrane"/>
    <property type="evidence" value="ECO:0007669"/>
    <property type="project" value="GOC"/>
</dbReference>
<dbReference type="GO" id="GO:0046872">
    <property type="term" value="F:metal ion binding"/>
    <property type="evidence" value="ECO:0007669"/>
    <property type="project" value="UniProtKB-KW"/>
</dbReference>
<dbReference type="GO" id="GO:0103117">
    <property type="term" value="F:UDP-3-O-acyl-N-acetylglucosamine deacetylase activity"/>
    <property type="evidence" value="ECO:0007669"/>
    <property type="project" value="UniProtKB-UniRule"/>
</dbReference>
<dbReference type="GO" id="GO:0009245">
    <property type="term" value="P:lipid A biosynthetic process"/>
    <property type="evidence" value="ECO:0007669"/>
    <property type="project" value="UniProtKB-UniRule"/>
</dbReference>
<dbReference type="FunFam" id="3.30.1700.10:FF:000001">
    <property type="entry name" value="UDP-3-O-acyl-N-acetylglucosamine deacetylase"/>
    <property type="match status" value="1"/>
</dbReference>
<dbReference type="FunFam" id="3.30.230.20:FF:000001">
    <property type="entry name" value="UDP-3-O-acyl-N-acetylglucosamine deacetylase"/>
    <property type="match status" value="1"/>
</dbReference>
<dbReference type="Gene3D" id="3.30.230.20">
    <property type="entry name" value="lpxc deacetylase, domain 1"/>
    <property type="match status" value="1"/>
</dbReference>
<dbReference type="Gene3D" id="3.30.1700.10">
    <property type="entry name" value="lpxc deacetylase, domain 2"/>
    <property type="match status" value="1"/>
</dbReference>
<dbReference type="HAMAP" id="MF_00388">
    <property type="entry name" value="LpxC"/>
    <property type="match status" value="1"/>
</dbReference>
<dbReference type="InterPro" id="IPR020568">
    <property type="entry name" value="Ribosomal_Su5_D2-typ_SF"/>
</dbReference>
<dbReference type="InterPro" id="IPR004463">
    <property type="entry name" value="UDP-acyl_GlcNac_deAcase"/>
</dbReference>
<dbReference type="InterPro" id="IPR011334">
    <property type="entry name" value="UDP-acyl_GlcNac_deAcase_C"/>
</dbReference>
<dbReference type="InterPro" id="IPR015870">
    <property type="entry name" value="UDP-acyl_N-AcGlcN_deAcase_N"/>
</dbReference>
<dbReference type="NCBIfam" id="TIGR00325">
    <property type="entry name" value="lpxC"/>
    <property type="match status" value="1"/>
</dbReference>
<dbReference type="PANTHER" id="PTHR33694">
    <property type="entry name" value="UDP-3-O-ACYL-N-ACETYLGLUCOSAMINE DEACETYLASE 1, MITOCHONDRIAL-RELATED"/>
    <property type="match status" value="1"/>
</dbReference>
<dbReference type="PANTHER" id="PTHR33694:SF1">
    <property type="entry name" value="UDP-3-O-ACYL-N-ACETYLGLUCOSAMINE DEACETYLASE 1, MITOCHONDRIAL-RELATED"/>
    <property type="match status" value="1"/>
</dbReference>
<dbReference type="Pfam" id="PF03331">
    <property type="entry name" value="LpxC"/>
    <property type="match status" value="1"/>
</dbReference>
<dbReference type="SUPFAM" id="SSF54211">
    <property type="entry name" value="Ribosomal protein S5 domain 2-like"/>
    <property type="match status" value="2"/>
</dbReference>
<comment type="function">
    <text evidence="1">Catalyzes the hydrolysis of UDP-3-O-myristoyl-N-acetylglucosamine to form UDP-3-O-myristoylglucosamine and acetate, the committed step in lipid A biosynthesis.</text>
</comment>
<comment type="catalytic activity">
    <reaction evidence="1">
        <text>a UDP-3-O-[(3R)-3-hydroxyacyl]-N-acetyl-alpha-D-glucosamine + H2O = a UDP-3-O-[(3R)-3-hydroxyacyl]-alpha-D-glucosamine + acetate</text>
        <dbReference type="Rhea" id="RHEA:67816"/>
        <dbReference type="ChEBI" id="CHEBI:15377"/>
        <dbReference type="ChEBI" id="CHEBI:30089"/>
        <dbReference type="ChEBI" id="CHEBI:137740"/>
        <dbReference type="ChEBI" id="CHEBI:173225"/>
        <dbReference type="EC" id="3.5.1.108"/>
    </reaction>
</comment>
<comment type="cofactor">
    <cofactor evidence="1">
        <name>Zn(2+)</name>
        <dbReference type="ChEBI" id="CHEBI:29105"/>
    </cofactor>
</comment>
<comment type="pathway">
    <text evidence="1">Glycolipid biosynthesis; lipid IV(A) biosynthesis; lipid IV(A) from (3R)-3-hydroxytetradecanoyl-[acyl-carrier-protein] and UDP-N-acetyl-alpha-D-glucosamine: step 2/6.</text>
</comment>
<comment type="similarity">
    <text evidence="1">Belongs to the LpxC family.</text>
</comment>
<keyword id="KW-0378">Hydrolase</keyword>
<keyword id="KW-0441">Lipid A biosynthesis</keyword>
<keyword id="KW-0444">Lipid biosynthesis</keyword>
<keyword id="KW-0443">Lipid metabolism</keyword>
<keyword id="KW-0479">Metal-binding</keyword>
<keyword id="KW-1185">Reference proteome</keyword>
<keyword id="KW-0862">Zinc</keyword>
<name>LPXC_PROMH</name>
<proteinExistence type="inferred from homology"/>
<organism>
    <name type="scientific">Proteus mirabilis (strain HI4320)</name>
    <dbReference type="NCBI Taxonomy" id="529507"/>
    <lineage>
        <taxon>Bacteria</taxon>
        <taxon>Pseudomonadati</taxon>
        <taxon>Pseudomonadota</taxon>
        <taxon>Gammaproteobacteria</taxon>
        <taxon>Enterobacterales</taxon>
        <taxon>Morganellaceae</taxon>
        <taxon>Proteus</taxon>
    </lineage>
</organism>
<gene>
    <name evidence="1" type="primary">lpxC</name>
    <name type="ordered locus">PMI2064</name>
</gene>
<feature type="chain" id="PRO_1000122807" description="UDP-3-O-acyl-N-acetylglucosamine deacetylase">
    <location>
        <begin position="1"/>
        <end position="305"/>
    </location>
</feature>
<feature type="active site" description="Proton donor" evidence="1">
    <location>
        <position position="265"/>
    </location>
</feature>
<feature type="binding site" evidence="1">
    <location>
        <position position="79"/>
    </location>
    <ligand>
        <name>Zn(2+)</name>
        <dbReference type="ChEBI" id="CHEBI:29105"/>
    </ligand>
</feature>
<feature type="binding site" evidence="1">
    <location>
        <position position="238"/>
    </location>
    <ligand>
        <name>Zn(2+)</name>
        <dbReference type="ChEBI" id="CHEBI:29105"/>
    </ligand>
</feature>
<feature type="binding site" evidence="1">
    <location>
        <position position="242"/>
    </location>
    <ligand>
        <name>Zn(2+)</name>
        <dbReference type="ChEBI" id="CHEBI:29105"/>
    </ligand>
</feature>
<sequence>MIKQRTLKRIVQATGVGLHTGKKVTLTMRPAPANTGVIYRRTDLNPPVDFPADAKSVRDTMLCTCLVNEDDVRISTVEHLNAALAGLGIDNIVIEVDAPEIPIMDGSAAPFVFLLLDAGIEELRTAKKFIRIKETVRVEDGDKWAEMRPYNGFKLDFTIDFNHPAIDASTQRYKLDFSAESFMSQISRARTFGFMRDIEYLQSKGLCLGGSFDCAIVVDDYRVLNDDGLRFEDEFVRHKMLDAIGDLFMCGYNIIGEFTAFKSGHALNNKLLQAVLAKESAWEFVTFEDEAKMPVAFKAPSTVFA</sequence>
<accession>B4F105</accession>
<evidence type="ECO:0000255" key="1">
    <source>
        <dbReference type="HAMAP-Rule" id="MF_00388"/>
    </source>
</evidence>
<protein>
    <recommendedName>
        <fullName evidence="1">UDP-3-O-acyl-N-acetylglucosamine deacetylase</fullName>
        <shortName evidence="1">UDP-3-O-acyl-GlcNAc deacetylase</shortName>
        <ecNumber evidence="1">3.5.1.108</ecNumber>
    </recommendedName>
    <alternativeName>
        <fullName evidence="1">UDP-3-O-[R-3-hydroxymyristoyl]-N-acetylglucosamine deacetylase</fullName>
    </alternativeName>
</protein>